<dbReference type="EC" id="3.6.1.31" evidence="1"/>
<dbReference type="EMBL" id="CP000887">
    <property type="protein sequence ID" value="ACD73437.1"/>
    <property type="molecule type" value="Genomic_DNA"/>
</dbReference>
<dbReference type="RefSeq" id="WP_002965152.1">
    <property type="nucleotide sequence ID" value="NC_010742.1"/>
</dbReference>
<dbReference type="SMR" id="B2S985"/>
<dbReference type="KEGG" id="bmc:BAbS19_I19550"/>
<dbReference type="HOGENOM" id="CLU_123337_1_1_5"/>
<dbReference type="UniPathway" id="UPA00031">
    <property type="reaction ID" value="UER00007"/>
</dbReference>
<dbReference type="Proteomes" id="UP000002565">
    <property type="component" value="Chromosome 1"/>
</dbReference>
<dbReference type="GO" id="GO:0005737">
    <property type="term" value="C:cytoplasm"/>
    <property type="evidence" value="ECO:0007669"/>
    <property type="project" value="UniProtKB-SubCell"/>
</dbReference>
<dbReference type="GO" id="GO:0005524">
    <property type="term" value="F:ATP binding"/>
    <property type="evidence" value="ECO:0007669"/>
    <property type="project" value="UniProtKB-KW"/>
</dbReference>
<dbReference type="GO" id="GO:0004636">
    <property type="term" value="F:phosphoribosyl-ATP diphosphatase activity"/>
    <property type="evidence" value="ECO:0007669"/>
    <property type="project" value="UniProtKB-UniRule"/>
</dbReference>
<dbReference type="GO" id="GO:0000105">
    <property type="term" value="P:L-histidine biosynthetic process"/>
    <property type="evidence" value="ECO:0007669"/>
    <property type="project" value="UniProtKB-UniRule"/>
</dbReference>
<dbReference type="CDD" id="cd11534">
    <property type="entry name" value="NTP-PPase_HisIE_like"/>
    <property type="match status" value="1"/>
</dbReference>
<dbReference type="Gene3D" id="1.10.287.1080">
    <property type="entry name" value="MazG-like"/>
    <property type="match status" value="1"/>
</dbReference>
<dbReference type="HAMAP" id="MF_01020">
    <property type="entry name" value="HisE"/>
    <property type="match status" value="1"/>
</dbReference>
<dbReference type="InterPro" id="IPR008179">
    <property type="entry name" value="HisE"/>
</dbReference>
<dbReference type="InterPro" id="IPR021130">
    <property type="entry name" value="PRib-ATP_PPHydrolase-like"/>
</dbReference>
<dbReference type="NCBIfam" id="TIGR03188">
    <property type="entry name" value="histidine_hisI"/>
    <property type="match status" value="1"/>
</dbReference>
<dbReference type="NCBIfam" id="NF001613">
    <property type="entry name" value="PRK00400.1-5"/>
    <property type="match status" value="1"/>
</dbReference>
<dbReference type="PANTHER" id="PTHR42945">
    <property type="entry name" value="HISTIDINE BIOSYNTHESIS BIFUNCTIONAL PROTEIN"/>
    <property type="match status" value="1"/>
</dbReference>
<dbReference type="PANTHER" id="PTHR42945:SF9">
    <property type="entry name" value="HISTIDINE BIOSYNTHESIS BIFUNCTIONAL PROTEIN HISIE"/>
    <property type="match status" value="1"/>
</dbReference>
<dbReference type="Pfam" id="PF01503">
    <property type="entry name" value="PRA-PH"/>
    <property type="match status" value="1"/>
</dbReference>
<dbReference type="SUPFAM" id="SSF101386">
    <property type="entry name" value="all-alpha NTP pyrophosphatases"/>
    <property type="match status" value="1"/>
</dbReference>
<keyword id="KW-0028">Amino-acid biosynthesis</keyword>
<keyword id="KW-0067">ATP-binding</keyword>
<keyword id="KW-0963">Cytoplasm</keyword>
<keyword id="KW-0368">Histidine biosynthesis</keyword>
<keyword id="KW-0378">Hydrolase</keyword>
<keyword id="KW-0547">Nucleotide-binding</keyword>
<feature type="chain" id="PRO_1000135303" description="Phosphoribosyl-ATP pyrophosphatase">
    <location>
        <begin position="1"/>
        <end position="107"/>
    </location>
</feature>
<gene>
    <name evidence="1" type="primary">hisE</name>
    <name type="ordered locus">BAbS19_I19550</name>
</gene>
<proteinExistence type="inferred from homology"/>
<comment type="catalytic activity">
    <reaction evidence="1">
        <text>1-(5-phospho-beta-D-ribosyl)-ATP + H2O = 1-(5-phospho-beta-D-ribosyl)-5'-AMP + diphosphate + H(+)</text>
        <dbReference type="Rhea" id="RHEA:22828"/>
        <dbReference type="ChEBI" id="CHEBI:15377"/>
        <dbReference type="ChEBI" id="CHEBI:15378"/>
        <dbReference type="ChEBI" id="CHEBI:33019"/>
        <dbReference type="ChEBI" id="CHEBI:59457"/>
        <dbReference type="ChEBI" id="CHEBI:73183"/>
        <dbReference type="EC" id="3.6.1.31"/>
    </reaction>
</comment>
<comment type="pathway">
    <text evidence="1">Amino-acid biosynthesis; L-histidine biosynthesis; L-histidine from 5-phospho-alpha-D-ribose 1-diphosphate: step 2/9.</text>
</comment>
<comment type="subcellular location">
    <subcellularLocation>
        <location evidence="1">Cytoplasm</location>
    </subcellularLocation>
</comment>
<comment type="similarity">
    <text evidence="1">Belongs to the PRA-PH family.</text>
</comment>
<organism>
    <name type="scientific">Brucella abortus (strain S19)</name>
    <dbReference type="NCBI Taxonomy" id="430066"/>
    <lineage>
        <taxon>Bacteria</taxon>
        <taxon>Pseudomonadati</taxon>
        <taxon>Pseudomonadota</taxon>
        <taxon>Alphaproteobacteria</taxon>
        <taxon>Hyphomicrobiales</taxon>
        <taxon>Brucellaceae</taxon>
        <taxon>Brucella/Ochrobactrum group</taxon>
        <taxon>Brucella</taxon>
    </lineage>
</organism>
<protein>
    <recommendedName>
        <fullName evidence="1">Phosphoribosyl-ATP pyrophosphatase</fullName>
        <shortName evidence="1">PRA-PH</shortName>
        <ecNumber evidence="1">3.6.1.31</ecNumber>
    </recommendedName>
</protein>
<name>HIS2_BRUA1</name>
<reference key="1">
    <citation type="journal article" date="2008" name="PLoS ONE">
        <title>Genome sequence of Brucella abortus vaccine strain S19 compared to virulent strains yields candidate virulence genes.</title>
        <authorList>
            <person name="Crasta O.R."/>
            <person name="Folkerts O."/>
            <person name="Fei Z."/>
            <person name="Mane S.P."/>
            <person name="Evans C."/>
            <person name="Martino-Catt S."/>
            <person name="Bricker B."/>
            <person name="Yu G."/>
            <person name="Du L."/>
            <person name="Sobral B.W."/>
        </authorList>
    </citation>
    <scope>NUCLEOTIDE SEQUENCE [LARGE SCALE GENOMIC DNA]</scope>
    <source>
        <strain>S19</strain>
    </source>
</reference>
<accession>B2S985</accession>
<evidence type="ECO:0000255" key="1">
    <source>
        <dbReference type="HAMAP-Rule" id="MF_01020"/>
    </source>
</evidence>
<sequence length="107" mass="11253">MSQFTLADLERIVAERASVTDGTSYTASLVAKGQPKAAQKLGEEAVETVIAAVSGDRAGVVSESADLLYHLAVVWNIAGVALEDVLQELQRRTAQTGLAEKASRPKG</sequence>